<feature type="chain" id="PRO_0000333496" description="Endosomal/vacuolar adapter protein YPT35">
    <location>
        <begin position="1"/>
        <end position="214"/>
    </location>
</feature>
<feature type="domain" description="PX" evidence="2">
    <location>
        <begin position="73"/>
        <end position="213"/>
    </location>
</feature>
<feature type="region of interest" description="Disordered" evidence="3">
    <location>
        <begin position="1"/>
        <end position="63"/>
    </location>
</feature>
<feature type="short sequence motif" description="PxP" evidence="1">
    <location>
        <begin position="5"/>
        <end position="15"/>
    </location>
</feature>
<feature type="compositionally biased region" description="Acidic residues" evidence="3">
    <location>
        <begin position="16"/>
        <end position="31"/>
    </location>
</feature>
<feature type="compositionally biased region" description="Low complexity" evidence="3">
    <location>
        <begin position="38"/>
        <end position="58"/>
    </location>
</feature>
<feature type="modified residue" description="Phosphoserine" evidence="1">
    <location>
        <position position="65"/>
    </location>
</feature>
<feature type="modified residue" description="Phosphoserine" evidence="1">
    <location>
        <position position="66"/>
    </location>
</feature>
<name>YPT35_YEAS7</name>
<proteinExistence type="inferred from homology"/>
<gene>
    <name type="primary">YPT35</name>
    <name type="ORF">SCY_2497</name>
</gene>
<comment type="function">
    <text evidence="1">Recruits the lipid transfer protein VPS13 to endosomal and vacuolar membranes.</text>
</comment>
<comment type="subunit">
    <text>Interacts with RBD2, YIF1, YIP1 and YIP4.</text>
</comment>
<comment type="subcellular location">
    <subcellularLocation>
        <location evidence="1">Endosome membrane</location>
        <topology evidence="1">Peripheral membrane protein</topology>
    </subcellularLocation>
    <subcellularLocation>
        <location evidence="1">Vacuole membrane</location>
        <topology evidence="1">Peripheral membrane protein</topology>
    </subcellularLocation>
</comment>
<comment type="domain">
    <text evidence="1">The PX domain binds phosphatidylinositol 3-phosphate (PtdIns(3)P) which is necessary for peripheral membrane localization.</text>
</comment>
<comment type="similarity">
    <text evidence="4">Belongs to the YPT35 family.</text>
</comment>
<reference key="1">
    <citation type="journal article" date="2007" name="Proc. Natl. Acad. Sci. U.S.A.">
        <title>Genome sequencing and comparative analysis of Saccharomyces cerevisiae strain YJM789.</title>
        <authorList>
            <person name="Wei W."/>
            <person name="McCusker J.H."/>
            <person name="Hyman R.W."/>
            <person name="Jones T."/>
            <person name="Ning Y."/>
            <person name="Cao Z."/>
            <person name="Gu Z."/>
            <person name="Bruno D."/>
            <person name="Miranda M."/>
            <person name="Nguyen M."/>
            <person name="Wilhelmy J."/>
            <person name="Komp C."/>
            <person name="Tamse R."/>
            <person name="Wang X."/>
            <person name="Jia P."/>
            <person name="Luedi P."/>
            <person name="Oefner P.J."/>
            <person name="David L."/>
            <person name="Dietrich F.S."/>
            <person name="Li Y."/>
            <person name="Davis R.W."/>
            <person name="Steinmetz L.M."/>
        </authorList>
    </citation>
    <scope>NUCLEOTIDE SEQUENCE [LARGE SCALE GENOMIC DNA]</scope>
    <source>
        <strain>YJM789</strain>
    </source>
</reference>
<keyword id="KW-0967">Endosome</keyword>
<keyword id="KW-0472">Membrane</keyword>
<keyword id="KW-0597">Phosphoprotein</keyword>
<keyword id="KW-0926">Vacuole</keyword>
<protein>
    <recommendedName>
        <fullName evidence="4">Endosomal/vacuolar adapter protein YPT35</fullName>
    </recommendedName>
    <alternativeName>
        <fullName evidence="4">PX domain-containing protein YPT35</fullName>
    </alternativeName>
</protein>
<evidence type="ECO:0000250" key="1">
    <source>
        <dbReference type="UniProtKB" id="P38815"/>
    </source>
</evidence>
<evidence type="ECO:0000255" key="2">
    <source>
        <dbReference type="PROSITE-ProRule" id="PRU00147"/>
    </source>
</evidence>
<evidence type="ECO:0000256" key="3">
    <source>
        <dbReference type="SAM" id="MobiDB-lite"/>
    </source>
</evidence>
<evidence type="ECO:0000305" key="4"/>
<dbReference type="EMBL" id="AAFW02000082">
    <property type="protein sequence ID" value="EDN62344.1"/>
    <property type="molecule type" value="Genomic_DNA"/>
</dbReference>
<dbReference type="SMR" id="A6ZT13"/>
<dbReference type="HOGENOM" id="CLU_1475537_0_0_1"/>
<dbReference type="Proteomes" id="UP000007060">
    <property type="component" value="Unassembled WGS sequence"/>
</dbReference>
<dbReference type="GO" id="GO:0010008">
    <property type="term" value="C:endosome membrane"/>
    <property type="evidence" value="ECO:0007669"/>
    <property type="project" value="UniProtKB-SubCell"/>
</dbReference>
<dbReference type="GO" id="GO:0005774">
    <property type="term" value="C:vacuolar membrane"/>
    <property type="evidence" value="ECO:0007669"/>
    <property type="project" value="UniProtKB-SubCell"/>
</dbReference>
<dbReference type="GO" id="GO:0032266">
    <property type="term" value="F:phosphatidylinositol-3-phosphate binding"/>
    <property type="evidence" value="ECO:0007669"/>
    <property type="project" value="InterPro"/>
</dbReference>
<dbReference type="GO" id="GO:0030674">
    <property type="term" value="F:protein-macromolecule adaptor activity"/>
    <property type="evidence" value="ECO:0000250"/>
    <property type="project" value="UniProtKB"/>
</dbReference>
<dbReference type="GO" id="GO:0072657">
    <property type="term" value="P:protein localization to membrane"/>
    <property type="evidence" value="ECO:0000250"/>
    <property type="project" value="UniProtKB"/>
</dbReference>
<dbReference type="CDD" id="cd07280">
    <property type="entry name" value="PX_YPT35"/>
    <property type="match status" value="1"/>
</dbReference>
<dbReference type="Gene3D" id="3.30.1520.10">
    <property type="entry name" value="Phox-like domain"/>
    <property type="match status" value="1"/>
</dbReference>
<dbReference type="InterPro" id="IPR001683">
    <property type="entry name" value="PX_dom"/>
</dbReference>
<dbReference type="InterPro" id="IPR036871">
    <property type="entry name" value="PX_dom_sf"/>
</dbReference>
<dbReference type="InterPro" id="IPR037917">
    <property type="entry name" value="Ypt35_PX"/>
</dbReference>
<dbReference type="Pfam" id="PF00787">
    <property type="entry name" value="PX"/>
    <property type="match status" value="1"/>
</dbReference>
<dbReference type="SMART" id="SM00312">
    <property type="entry name" value="PX"/>
    <property type="match status" value="1"/>
</dbReference>
<dbReference type="SUPFAM" id="SSF64268">
    <property type="entry name" value="PX domain"/>
    <property type="match status" value="1"/>
</dbReference>
<dbReference type="PROSITE" id="PS50195">
    <property type="entry name" value="PX"/>
    <property type="match status" value="1"/>
</dbReference>
<organism>
    <name type="scientific">Saccharomyces cerevisiae (strain YJM789)</name>
    <name type="common">Baker's yeast</name>
    <dbReference type="NCBI Taxonomy" id="307796"/>
    <lineage>
        <taxon>Eukaryota</taxon>
        <taxon>Fungi</taxon>
        <taxon>Dikarya</taxon>
        <taxon>Ascomycota</taxon>
        <taxon>Saccharomycotina</taxon>
        <taxon>Saccharomycetes</taxon>
        <taxon>Saccharomycetales</taxon>
        <taxon>Saccharomycetaceae</taxon>
        <taxon>Saccharomyces</taxon>
    </lineage>
</organism>
<sequence>MNDKISFLPPEPIQLLDEDSTEPELDIDSQQENEGPISASNSNDSTSHSNDCGATITRTRPRRSSSINANFSFQKAHVSDCTIVNGDHGTKFAVWRITVFLEPNLKAFAAKRESYKIQTYKRYSDFVRLRENLLTRIKTAKPEKLNCLQIPHLPPSVQWYSSWKYQEVNLNKDWLAKRQRGLEYFLNHIILNSSLVEMTKDILIQFLEPSKRVA</sequence>
<accession>A6ZT13</accession>